<evidence type="ECO:0000255" key="1">
    <source>
        <dbReference type="HAMAP-Rule" id="MF_01321"/>
    </source>
</evidence>
<reference key="1">
    <citation type="journal article" date="2009" name="Science">
        <title>The dynamics and time scale of ongoing genomic erosion in symbiotic bacteria.</title>
        <authorList>
            <person name="Moran N.A."/>
            <person name="McLaughlin H.J."/>
            <person name="Sorek R."/>
        </authorList>
    </citation>
    <scope>NUCLEOTIDE SEQUENCE [LARGE SCALE GENOMIC DNA]</scope>
    <source>
        <strain>5A</strain>
    </source>
</reference>
<organism>
    <name type="scientific">Buchnera aphidicola subsp. Acyrthosiphon pisum (strain 5A)</name>
    <dbReference type="NCBI Taxonomy" id="563178"/>
    <lineage>
        <taxon>Bacteria</taxon>
        <taxon>Pseudomonadati</taxon>
        <taxon>Pseudomonadota</taxon>
        <taxon>Gammaproteobacteria</taxon>
        <taxon>Enterobacterales</taxon>
        <taxon>Erwiniaceae</taxon>
        <taxon>Buchnera</taxon>
    </lineage>
</organism>
<name>RPOB_BUCA5</name>
<feature type="chain" id="PRO_1000165794" description="DNA-directed RNA polymerase subunit beta">
    <location>
        <begin position="1"/>
        <end position="1342"/>
    </location>
</feature>
<protein>
    <recommendedName>
        <fullName evidence="1">DNA-directed RNA polymerase subunit beta</fullName>
        <shortName evidence="1">RNAP subunit beta</shortName>
        <ecNumber evidence="1">2.7.7.6</ecNumber>
    </recommendedName>
    <alternativeName>
        <fullName evidence="1">RNA polymerase subunit beta</fullName>
    </alternativeName>
    <alternativeName>
        <fullName evidence="1">Transcriptase subunit beta</fullName>
    </alternativeName>
</protein>
<comment type="function">
    <text evidence="1">DNA-dependent RNA polymerase catalyzes the transcription of DNA into RNA using the four ribonucleoside triphosphates as substrates.</text>
</comment>
<comment type="catalytic activity">
    <reaction evidence="1">
        <text>RNA(n) + a ribonucleoside 5'-triphosphate = RNA(n+1) + diphosphate</text>
        <dbReference type="Rhea" id="RHEA:21248"/>
        <dbReference type="Rhea" id="RHEA-COMP:14527"/>
        <dbReference type="Rhea" id="RHEA-COMP:17342"/>
        <dbReference type="ChEBI" id="CHEBI:33019"/>
        <dbReference type="ChEBI" id="CHEBI:61557"/>
        <dbReference type="ChEBI" id="CHEBI:140395"/>
        <dbReference type="EC" id="2.7.7.6"/>
    </reaction>
</comment>
<comment type="subunit">
    <text evidence="1">The RNAP catalytic core consists of 2 alpha, 1 beta, 1 beta' and 1 omega subunit. When a sigma factor is associated with the core the holoenzyme is formed, which can initiate transcription.</text>
</comment>
<comment type="similarity">
    <text evidence="1">Belongs to the RNA polymerase beta chain family.</text>
</comment>
<sequence>MVYSYTEKKRIRKDFGKRPKVLDIPYLLSIQLNSFKKFIQPDLSGQHGLEAAFRSVFPIRGYNGNSELQYVSYRLGETIFDVKECQIRGATYSAPLRVKLRLVIYERDILEATVKDIKEQEVYMGEIPLMTNNGTFIINGTERVVVSQLHRSPGVFFDSDKGKTHSSGKVLYNARIIPYRGSWLDFEFDPKDNLFVRIDRRRKLPVSIILRALNYNTEEILNIFFEKNIFKIENNKIVLELVPERLRGETASFNIKKNGIIYVEKGRRITAKHIQELKNNKIKSITVPVEYILGRIVSKNYVDKKTGETIISSNTELSLEILEKLKKLGFYSIETLFTNDLDHGPYISETLRIDSSNDRMSALIEIYRVMRPGEPPTKEATENLFENLFFSEDRYDLSTVGRMKFNRSLLREETKGSSTLNKEDIIDVIKKIIDIRNGKGEVDDIDHLGNRRVRSVGEMAENQFRIGLVRVERAVKERLSIGDLDTLMPQDMINAKPISAAVKEFFGSSQLSQFMDQNNPLSEITHKRRISALGLGGLTRERAGFEVRDVHPTHYGRVCPIETPEGPNIGLINSLSVYAQTNSYGFLETPYRKVCNGLVSEEIHYLSAIEEGNYIIAQANTNIDKTGFFTDDLVTCRHKGESSLFNRNQVNYMDVSTQQIVSVGASLIPFLEHDDANRALMGANMQRQAVPTLKTDKPLIGTGMERAVAVDSGVTAVAKRSGVVQYVDASRIVIKVDEKEMYSREAGIDIYNLTKYTRSNQNTCINQQPCVNLGEKIKKGDVLADGPSTDLGELALGQNMRVAFMPWNGYNFEDSILVSERVVQEDRFTTIHIQELSCISRDTKLGAEEISSDIPNVGEAALSKLDESGIVYIGAEVTGGDILVGKVTPKGETQLTPEEKLLRAIFGEKASDVKDSSLRVPNGVSGTVIDVQIFTRDGVKKDKRALEIEDMQLKKIKQDLTEEFKIFESSLFTHIKKTFISLDIETKQLDTLPFEKWFSVDIKQKDKKKEIEKLAKQHHELKEEFNKKIEIKRQKITQGDDLAPGVLKIVKVYLAVKRQIQPGDKMAGRHGNKGVISKINPVEDMPYDENGIPVDIVLNPLGVPSRMNIGQILETHLGMAAKGIGDKINHMLKTQEKISNLRKFIQKAFDLGDNLRQKVNLDTFSNEEILRLAKNLKNGIPISTPVFDGAQENEIKQMLKFAGLPTSGQIILFDGRTGEKFERPVTVGYMYMLKLNHLVDDKMHARSTGSYSLVTQQPLGGKAQFGGQRFGEMEVWALEAYGASYTLQEMLTVKSDDVNGRTKMYKNIVDGNHQMEPGMPESFNVLLKEIRSLGINIELESE</sequence>
<dbReference type="EC" id="2.7.7.6" evidence="1"/>
<dbReference type="EMBL" id="CP001161">
    <property type="protein sequence ID" value="ACL30418.1"/>
    <property type="molecule type" value="Genomic_DNA"/>
</dbReference>
<dbReference type="RefSeq" id="WP_009873995.1">
    <property type="nucleotide sequence ID" value="NC_011833.1"/>
</dbReference>
<dbReference type="SMR" id="B8D8J6"/>
<dbReference type="KEGG" id="bap:BUAP5A_033"/>
<dbReference type="HOGENOM" id="CLU_000524_4_3_6"/>
<dbReference type="OrthoDB" id="9803954at2"/>
<dbReference type="Proteomes" id="UP000006904">
    <property type="component" value="Chromosome"/>
</dbReference>
<dbReference type="GO" id="GO:0000428">
    <property type="term" value="C:DNA-directed RNA polymerase complex"/>
    <property type="evidence" value="ECO:0007669"/>
    <property type="project" value="UniProtKB-KW"/>
</dbReference>
<dbReference type="GO" id="GO:0003677">
    <property type="term" value="F:DNA binding"/>
    <property type="evidence" value="ECO:0007669"/>
    <property type="project" value="UniProtKB-UniRule"/>
</dbReference>
<dbReference type="GO" id="GO:0003899">
    <property type="term" value="F:DNA-directed RNA polymerase activity"/>
    <property type="evidence" value="ECO:0007669"/>
    <property type="project" value="UniProtKB-UniRule"/>
</dbReference>
<dbReference type="GO" id="GO:0032549">
    <property type="term" value="F:ribonucleoside binding"/>
    <property type="evidence" value="ECO:0007669"/>
    <property type="project" value="InterPro"/>
</dbReference>
<dbReference type="GO" id="GO:0006351">
    <property type="term" value="P:DNA-templated transcription"/>
    <property type="evidence" value="ECO:0007669"/>
    <property type="project" value="UniProtKB-UniRule"/>
</dbReference>
<dbReference type="CDD" id="cd00653">
    <property type="entry name" value="RNA_pol_B_RPB2"/>
    <property type="match status" value="1"/>
</dbReference>
<dbReference type="FunFam" id="2.30.150.10:FF:000001">
    <property type="entry name" value="DNA-directed RNA polymerase subunit beta"/>
    <property type="match status" value="1"/>
</dbReference>
<dbReference type="FunFam" id="2.40.270.10:FF:000003">
    <property type="entry name" value="DNA-directed RNA polymerase subunit beta"/>
    <property type="match status" value="1"/>
</dbReference>
<dbReference type="FunFam" id="2.40.270.10:FF:000004">
    <property type="entry name" value="DNA-directed RNA polymerase subunit beta"/>
    <property type="match status" value="1"/>
</dbReference>
<dbReference type="FunFam" id="2.40.50.100:FF:000006">
    <property type="entry name" value="DNA-directed RNA polymerase subunit beta"/>
    <property type="match status" value="1"/>
</dbReference>
<dbReference type="FunFam" id="2.40.50.150:FF:000001">
    <property type="entry name" value="DNA-directed RNA polymerase subunit beta"/>
    <property type="match status" value="1"/>
</dbReference>
<dbReference type="FunFam" id="3.90.1100.10:FF:000002">
    <property type="entry name" value="DNA-directed RNA polymerase subunit beta"/>
    <property type="match status" value="1"/>
</dbReference>
<dbReference type="FunFam" id="3.90.1800.10:FF:000001">
    <property type="entry name" value="DNA-directed RNA polymerase subunit beta"/>
    <property type="match status" value="1"/>
</dbReference>
<dbReference type="Gene3D" id="2.40.50.100">
    <property type="match status" value="1"/>
</dbReference>
<dbReference type="Gene3D" id="2.40.50.150">
    <property type="match status" value="1"/>
</dbReference>
<dbReference type="Gene3D" id="3.90.1100.10">
    <property type="match status" value="2"/>
</dbReference>
<dbReference type="Gene3D" id="2.30.150.10">
    <property type="entry name" value="DNA-directed RNA polymerase, beta subunit, external 1 domain"/>
    <property type="match status" value="1"/>
</dbReference>
<dbReference type="Gene3D" id="2.40.270.10">
    <property type="entry name" value="DNA-directed RNA polymerase, subunit 2, domain 6"/>
    <property type="match status" value="1"/>
</dbReference>
<dbReference type="Gene3D" id="3.90.1800.10">
    <property type="entry name" value="RNA polymerase alpha subunit dimerisation domain"/>
    <property type="match status" value="1"/>
</dbReference>
<dbReference type="HAMAP" id="MF_01321">
    <property type="entry name" value="RNApol_bact_RpoB"/>
    <property type="match status" value="1"/>
</dbReference>
<dbReference type="InterPro" id="IPR042107">
    <property type="entry name" value="DNA-dir_RNA_pol_bsu_ext_1_sf"/>
</dbReference>
<dbReference type="InterPro" id="IPR019462">
    <property type="entry name" value="DNA-dir_RNA_pol_bsu_external_1"/>
</dbReference>
<dbReference type="InterPro" id="IPR015712">
    <property type="entry name" value="DNA-dir_RNA_pol_su2"/>
</dbReference>
<dbReference type="InterPro" id="IPR007120">
    <property type="entry name" value="DNA-dir_RNAP_su2_dom"/>
</dbReference>
<dbReference type="InterPro" id="IPR037033">
    <property type="entry name" value="DNA-dir_RNAP_su2_hyb_sf"/>
</dbReference>
<dbReference type="InterPro" id="IPR010243">
    <property type="entry name" value="RNA_pol_bsu_bac"/>
</dbReference>
<dbReference type="InterPro" id="IPR007121">
    <property type="entry name" value="RNA_pol_bsu_CS"/>
</dbReference>
<dbReference type="InterPro" id="IPR007644">
    <property type="entry name" value="RNA_pol_bsu_protrusion"/>
</dbReference>
<dbReference type="InterPro" id="IPR007642">
    <property type="entry name" value="RNA_pol_Rpb2_2"/>
</dbReference>
<dbReference type="InterPro" id="IPR007645">
    <property type="entry name" value="RNA_pol_Rpb2_3"/>
</dbReference>
<dbReference type="InterPro" id="IPR007641">
    <property type="entry name" value="RNA_pol_Rpb2_7"/>
</dbReference>
<dbReference type="InterPro" id="IPR014724">
    <property type="entry name" value="RNA_pol_RPB2_OB-fold"/>
</dbReference>
<dbReference type="NCBIfam" id="NF001616">
    <property type="entry name" value="PRK00405.1"/>
    <property type="match status" value="1"/>
</dbReference>
<dbReference type="NCBIfam" id="TIGR02013">
    <property type="entry name" value="rpoB"/>
    <property type="match status" value="1"/>
</dbReference>
<dbReference type="PANTHER" id="PTHR20856">
    <property type="entry name" value="DNA-DIRECTED RNA POLYMERASE I SUBUNIT 2"/>
    <property type="match status" value="1"/>
</dbReference>
<dbReference type="Pfam" id="PF04563">
    <property type="entry name" value="RNA_pol_Rpb2_1"/>
    <property type="match status" value="1"/>
</dbReference>
<dbReference type="Pfam" id="PF04561">
    <property type="entry name" value="RNA_pol_Rpb2_2"/>
    <property type="match status" value="2"/>
</dbReference>
<dbReference type="Pfam" id="PF04565">
    <property type="entry name" value="RNA_pol_Rpb2_3"/>
    <property type="match status" value="1"/>
</dbReference>
<dbReference type="Pfam" id="PF10385">
    <property type="entry name" value="RNA_pol_Rpb2_45"/>
    <property type="match status" value="1"/>
</dbReference>
<dbReference type="Pfam" id="PF00562">
    <property type="entry name" value="RNA_pol_Rpb2_6"/>
    <property type="match status" value="1"/>
</dbReference>
<dbReference type="Pfam" id="PF04560">
    <property type="entry name" value="RNA_pol_Rpb2_7"/>
    <property type="match status" value="1"/>
</dbReference>
<dbReference type="SUPFAM" id="SSF64484">
    <property type="entry name" value="beta and beta-prime subunits of DNA dependent RNA-polymerase"/>
    <property type="match status" value="1"/>
</dbReference>
<dbReference type="PROSITE" id="PS01166">
    <property type="entry name" value="RNA_POL_BETA"/>
    <property type="match status" value="1"/>
</dbReference>
<gene>
    <name evidence="1" type="primary">rpoB</name>
    <name type="ordered locus">BUAP5A_033</name>
</gene>
<keyword id="KW-0240">DNA-directed RNA polymerase</keyword>
<keyword id="KW-0548">Nucleotidyltransferase</keyword>
<keyword id="KW-0804">Transcription</keyword>
<keyword id="KW-0808">Transferase</keyword>
<proteinExistence type="inferred from homology"/>
<accession>B8D8J6</accession>